<gene>
    <name evidence="1" type="primary">truA</name>
    <name type="ordered locus">HEAR1221</name>
</gene>
<name>TRUA_HERAR</name>
<proteinExistence type="inferred from homology"/>
<sequence length="275" mass="31065">MNGESGDAITSRRIVLGVQYDGAPWQGWQTQLNGLTVQDKLEFALYKFTQQTITTACAGRTDAGVHALEQVVHFDTTLERDMQSWVRGVNTFLPSSIAVRWASEVAHDPAENFHARFSARSRTYHYMLYNNPVRSPLLEGKAGWVFRALDIAKMQEAAAHLLGQHDFSAFRSVQCQAKSPVKTMHAIKIERRGDLIMFTVHANAFLHHMVRNIVGSLIYVGNGTQAPSWLKEVLAGQERKFAAPTFMPDGLYLAKIDYDPKWQLPQTEIQNFLWS</sequence>
<organism>
    <name type="scientific">Herminiimonas arsenicoxydans</name>
    <dbReference type="NCBI Taxonomy" id="204773"/>
    <lineage>
        <taxon>Bacteria</taxon>
        <taxon>Pseudomonadati</taxon>
        <taxon>Pseudomonadota</taxon>
        <taxon>Betaproteobacteria</taxon>
        <taxon>Burkholderiales</taxon>
        <taxon>Oxalobacteraceae</taxon>
        <taxon>Herminiimonas</taxon>
    </lineage>
</organism>
<evidence type="ECO:0000255" key="1">
    <source>
        <dbReference type="HAMAP-Rule" id="MF_00171"/>
    </source>
</evidence>
<reference key="1">
    <citation type="journal article" date="2007" name="PLoS Genet.">
        <title>A tale of two oxidation states: bacterial colonization of arsenic-rich environments.</title>
        <authorList>
            <person name="Muller D."/>
            <person name="Medigue C."/>
            <person name="Koechler S."/>
            <person name="Barbe V."/>
            <person name="Barakat M."/>
            <person name="Talla E."/>
            <person name="Bonnefoy V."/>
            <person name="Krin E."/>
            <person name="Arsene-Ploetze F."/>
            <person name="Carapito C."/>
            <person name="Chandler M."/>
            <person name="Cournoyer B."/>
            <person name="Cruveiller S."/>
            <person name="Dossat C."/>
            <person name="Duval S."/>
            <person name="Heymann M."/>
            <person name="Leize E."/>
            <person name="Lieutaud A."/>
            <person name="Lievremont D."/>
            <person name="Makita Y."/>
            <person name="Mangenot S."/>
            <person name="Nitschke W."/>
            <person name="Ortet P."/>
            <person name="Perdrial N."/>
            <person name="Schoepp B."/>
            <person name="Siguier P."/>
            <person name="Simeonova D.D."/>
            <person name="Rouy Z."/>
            <person name="Segurens B."/>
            <person name="Turlin E."/>
            <person name="Vallenet D."/>
            <person name="van Dorsselaer A."/>
            <person name="Weiss S."/>
            <person name="Weissenbach J."/>
            <person name="Lett M.-C."/>
            <person name="Danchin A."/>
            <person name="Bertin P.N."/>
        </authorList>
    </citation>
    <scope>NUCLEOTIDE SEQUENCE [LARGE SCALE GENOMIC DNA]</scope>
    <source>
        <strain>ULPAs1</strain>
    </source>
</reference>
<feature type="chain" id="PRO_1000077093" description="tRNA pseudouridine synthase A">
    <location>
        <begin position="1"/>
        <end position="275"/>
    </location>
</feature>
<feature type="active site" description="Nucleophile" evidence="1">
    <location>
        <position position="62"/>
    </location>
</feature>
<feature type="binding site" evidence="1">
    <location>
        <position position="124"/>
    </location>
    <ligand>
        <name>substrate</name>
    </ligand>
</feature>
<keyword id="KW-0413">Isomerase</keyword>
<keyword id="KW-1185">Reference proteome</keyword>
<keyword id="KW-0819">tRNA processing</keyword>
<protein>
    <recommendedName>
        <fullName evidence="1">tRNA pseudouridine synthase A</fullName>
        <ecNumber evidence="1">5.4.99.12</ecNumber>
    </recommendedName>
    <alternativeName>
        <fullName evidence="1">tRNA pseudouridine(38-40) synthase</fullName>
    </alternativeName>
    <alternativeName>
        <fullName evidence="1">tRNA pseudouridylate synthase I</fullName>
    </alternativeName>
    <alternativeName>
        <fullName evidence="1">tRNA-uridine isomerase I</fullName>
    </alternativeName>
</protein>
<accession>A4G4G0</accession>
<dbReference type="EC" id="5.4.99.12" evidence="1"/>
<dbReference type="EMBL" id="CU207211">
    <property type="protein sequence ID" value="CAL61397.1"/>
    <property type="molecule type" value="Genomic_DNA"/>
</dbReference>
<dbReference type="SMR" id="A4G4G0"/>
<dbReference type="STRING" id="204773.HEAR1221"/>
<dbReference type="KEGG" id="har:HEAR1221"/>
<dbReference type="eggNOG" id="COG0101">
    <property type="taxonomic scope" value="Bacteria"/>
</dbReference>
<dbReference type="HOGENOM" id="CLU_014673_0_2_4"/>
<dbReference type="OrthoDB" id="9811823at2"/>
<dbReference type="Proteomes" id="UP000006697">
    <property type="component" value="Chromosome"/>
</dbReference>
<dbReference type="GO" id="GO:0003723">
    <property type="term" value="F:RNA binding"/>
    <property type="evidence" value="ECO:0007669"/>
    <property type="project" value="InterPro"/>
</dbReference>
<dbReference type="GO" id="GO:0160147">
    <property type="term" value="F:tRNA pseudouridine(38-40) synthase activity"/>
    <property type="evidence" value="ECO:0007669"/>
    <property type="project" value="UniProtKB-EC"/>
</dbReference>
<dbReference type="GO" id="GO:0031119">
    <property type="term" value="P:tRNA pseudouridine synthesis"/>
    <property type="evidence" value="ECO:0007669"/>
    <property type="project" value="UniProtKB-UniRule"/>
</dbReference>
<dbReference type="CDD" id="cd02570">
    <property type="entry name" value="PseudoU_synth_EcTruA"/>
    <property type="match status" value="1"/>
</dbReference>
<dbReference type="FunFam" id="3.30.70.580:FF:000001">
    <property type="entry name" value="tRNA pseudouridine synthase A"/>
    <property type="match status" value="1"/>
</dbReference>
<dbReference type="Gene3D" id="3.30.70.660">
    <property type="entry name" value="Pseudouridine synthase I, catalytic domain, C-terminal subdomain"/>
    <property type="match status" value="1"/>
</dbReference>
<dbReference type="Gene3D" id="3.30.70.580">
    <property type="entry name" value="Pseudouridine synthase I, catalytic domain, N-terminal subdomain"/>
    <property type="match status" value="1"/>
</dbReference>
<dbReference type="HAMAP" id="MF_00171">
    <property type="entry name" value="TruA"/>
    <property type="match status" value="1"/>
</dbReference>
<dbReference type="InterPro" id="IPR020103">
    <property type="entry name" value="PsdUridine_synth_cat_dom_sf"/>
</dbReference>
<dbReference type="InterPro" id="IPR001406">
    <property type="entry name" value="PsdUridine_synth_TruA"/>
</dbReference>
<dbReference type="InterPro" id="IPR020097">
    <property type="entry name" value="PsdUridine_synth_TruA_a/b_dom"/>
</dbReference>
<dbReference type="InterPro" id="IPR020095">
    <property type="entry name" value="PsdUridine_synth_TruA_C"/>
</dbReference>
<dbReference type="InterPro" id="IPR020094">
    <property type="entry name" value="TruA/RsuA/RluB/E/F_N"/>
</dbReference>
<dbReference type="NCBIfam" id="TIGR00071">
    <property type="entry name" value="hisT_truA"/>
    <property type="match status" value="1"/>
</dbReference>
<dbReference type="PANTHER" id="PTHR11142">
    <property type="entry name" value="PSEUDOURIDYLATE SYNTHASE"/>
    <property type="match status" value="1"/>
</dbReference>
<dbReference type="PANTHER" id="PTHR11142:SF0">
    <property type="entry name" value="TRNA PSEUDOURIDINE SYNTHASE-LIKE 1"/>
    <property type="match status" value="1"/>
</dbReference>
<dbReference type="Pfam" id="PF01416">
    <property type="entry name" value="PseudoU_synth_1"/>
    <property type="match status" value="2"/>
</dbReference>
<dbReference type="PIRSF" id="PIRSF001430">
    <property type="entry name" value="tRNA_psdUrid_synth"/>
    <property type="match status" value="1"/>
</dbReference>
<dbReference type="SUPFAM" id="SSF55120">
    <property type="entry name" value="Pseudouridine synthase"/>
    <property type="match status" value="1"/>
</dbReference>
<comment type="function">
    <text evidence="1">Formation of pseudouridine at positions 38, 39 and 40 in the anticodon stem and loop of transfer RNAs.</text>
</comment>
<comment type="catalytic activity">
    <reaction evidence="1">
        <text>uridine(38/39/40) in tRNA = pseudouridine(38/39/40) in tRNA</text>
        <dbReference type="Rhea" id="RHEA:22376"/>
        <dbReference type="Rhea" id="RHEA-COMP:10085"/>
        <dbReference type="Rhea" id="RHEA-COMP:10087"/>
        <dbReference type="ChEBI" id="CHEBI:65314"/>
        <dbReference type="ChEBI" id="CHEBI:65315"/>
        <dbReference type="EC" id="5.4.99.12"/>
    </reaction>
</comment>
<comment type="subunit">
    <text evidence="1">Homodimer.</text>
</comment>
<comment type="similarity">
    <text evidence="1">Belongs to the tRNA pseudouridine synthase TruA family.</text>
</comment>